<comment type="function">
    <text evidence="1">Catalyzes the NAD-dependent reduction of succinylglutamate semialdehyde into succinylglutamate.</text>
</comment>
<comment type="catalytic activity">
    <reaction evidence="1">
        <text>N-succinyl-L-glutamate 5-semialdehyde + NAD(+) + H2O = N-succinyl-L-glutamate + NADH + 2 H(+)</text>
        <dbReference type="Rhea" id="RHEA:10812"/>
        <dbReference type="ChEBI" id="CHEBI:15377"/>
        <dbReference type="ChEBI" id="CHEBI:15378"/>
        <dbReference type="ChEBI" id="CHEBI:57540"/>
        <dbReference type="ChEBI" id="CHEBI:57945"/>
        <dbReference type="ChEBI" id="CHEBI:58520"/>
        <dbReference type="ChEBI" id="CHEBI:58763"/>
        <dbReference type="EC" id="1.2.1.71"/>
    </reaction>
</comment>
<comment type="pathway">
    <text evidence="1">Amino-acid degradation; L-arginine degradation via AST pathway; L-glutamate and succinate from L-arginine: step 4/5.</text>
</comment>
<comment type="similarity">
    <text evidence="1">Belongs to the aldehyde dehydrogenase family. AstD subfamily.</text>
</comment>
<dbReference type="EC" id="1.2.1.71" evidence="1"/>
<dbReference type="EMBL" id="CP000151">
    <property type="protein sequence ID" value="ABB07891.1"/>
    <property type="molecule type" value="Genomic_DNA"/>
</dbReference>
<dbReference type="RefSeq" id="WP_011351462.1">
    <property type="nucleotide sequence ID" value="NC_007510.1"/>
</dbReference>
<dbReference type="SMR" id="Q39I25"/>
<dbReference type="GeneID" id="45094199"/>
<dbReference type="KEGG" id="bur:Bcep18194_A4294"/>
<dbReference type="PATRIC" id="fig|482957.22.peg.1187"/>
<dbReference type="HOGENOM" id="CLU_005391_1_0_4"/>
<dbReference type="UniPathway" id="UPA00185">
    <property type="reaction ID" value="UER00282"/>
</dbReference>
<dbReference type="Proteomes" id="UP000002705">
    <property type="component" value="Chromosome 1"/>
</dbReference>
<dbReference type="GO" id="GO:0043824">
    <property type="term" value="F:succinylglutamate-semialdehyde dehydrogenase activity"/>
    <property type="evidence" value="ECO:0007669"/>
    <property type="project" value="UniProtKB-EC"/>
</dbReference>
<dbReference type="GO" id="GO:0019544">
    <property type="term" value="P:arginine catabolic process to glutamate"/>
    <property type="evidence" value="ECO:0007669"/>
    <property type="project" value="UniProtKB-UniRule"/>
</dbReference>
<dbReference type="GO" id="GO:0019545">
    <property type="term" value="P:arginine catabolic process to succinate"/>
    <property type="evidence" value="ECO:0007669"/>
    <property type="project" value="UniProtKB-UniRule"/>
</dbReference>
<dbReference type="CDD" id="cd07095">
    <property type="entry name" value="ALDH_SGSD_AstD"/>
    <property type="match status" value="1"/>
</dbReference>
<dbReference type="FunFam" id="3.40.605.10:FF:000010">
    <property type="entry name" value="N-succinylglutamate 5-semialdehyde dehydrogenase"/>
    <property type="match status" value="1"/>
</dbReference>
<dbReference type="Gene3D" id="3.40.605.10">
    <property type="entry name" value="Aldehyde Dehydrogenase, Chain A, domain 1"/>
    <property type="match status" value="1"/>
</dbReference>
<dbReference type="Gene3D" id="3.40.309.10">
    <property type="entry name" value="Aldehyde Dehydrogenase, Chain A, domain 2"/>
    <property type="match status" value="1"/>
</dbReference>
<dbReference type="HAMAP" id="MF_01174">
    <property type="entry name" value="Aldedh_AstD"/>
    <property type="match status" value="1"/>
</dbReference>
<dbReference type="InterPro" id="IPR016161">
    <property type="entry name" value="Ald_DH/histidinol_DH"/>
</dbReference>
<dbReference type="InterPro" id="IPR016163">
    <property type="entry name" value="Ald_DH_C"/>
</dbReference>
<dbReference type="InterPro" id="IPR016160">
    <property type="entry name" value="Ald_DH_CS_CYS"/>
</dbReference>
<dbReference type="InterPro" id="IPR029510">
    <property type="entry name" value="Ald_DH_CS_GLU"/>
</dbReference>
<dbReference type="InterPro" id="IPR016162">
    <property type="entry name" value="Ald_DH_N"/>
</dbReference>
<dbReference type="InterPro" id="IPR015590">
    <property type="entry name" value="Aldehyde_DH_dom"/>
</dbReference>
<dbReference type="InterPro" id="IPR017649">
    <property type="entry name" value="SuccinylGlu_semiald_DH_AstD"/>
</dbReference>
<dbReference type="NCBIfam" id="TIGR03240">
    <property type="entry name" value="arg_catab_astD"/>
    <property type="match status" value="1"/>
</dbReference>
<dbReference type="NCBIfam" id="NF006992">
    <property type="entry name" value="PRK09457.1"/>
    <property type="match status" value="1"/>
</dbReference>
<dbReference type="PANTHER" id="PTHR11699">
    <property type="entry name" value="ALDEHYDE DEHYDROGENASE-RELATED"/>
    <property type="match status" value="1"/>
</dbReference>
<dbReference type="Pfam" id="PF00171">
    <property type="entry name" value="Aldedh"/>
    <property type="match status" value="1"/>
</dbReference>
<dbReference type="SUPFAM" id="SSF53720">
    <property type="entry name" value="ALDH-like"/>
    <property type="match status" value="1"/>
</dbReference>
<dbReference type="PROSITE" id="PS00070">
    <property type="entry name" value="ALDEHYDE_DEHYDR_CYS"/>
    <property type="match status" value="1"/>
</dbReference>
<dbReference type="PROSITE" id="PS00687">
    <property type="entry name" value="ALDEHYDE_DEHYDR_GLU"/>
    <property type="match status" value="1"/>
</dbReference>
<organism>
    <name type="scientific">Burkholderia lata (strain ATCC 17760 / DSM 23089 / LMG 22485 / NCIMB 9086 / R18194 / 383)</name>
    <dbReference type="NCBI Taxonomy" id="482957"/>
    <lineage>
        <taxon>Bacteria</taxon>
        <taxon>Pseudomonadati</taxon>
        <taxon>Pseudomonadota</taxon>
        <taxon>Betaproteobacteria</taxon>
        <taxon>Burkholderiales</taxon>
        <taxon>Burkholderiaceae</taxon>
        <taxon>Burkholderia</taxon>
        <taxon>Burkholderia cepacia complex</taxon>
    </lineage>
</organism>
<proteinExistence type="inferred from homology"/>
<sequence>MTELFIDGAWVAGSGPVFASRNPGTDEIAWQGESASAADVDRAVASARRAFAGWSALDFESRCAIVKRFAALLNERKEAIAAAIGRETGKPLWEARTEVASMAAKVGISIQAYQERTGEKRQDMADGVAVLRHRPHGVVAVFGPYNFPGHLPNGHIVPALIAGNAVVFKPSELAPGVARATVEVWKEAGLPDGVLNLVQGEKDTGIALANHRQIDGLFFTGSSDTGTLLHKQFGGRPEIVLALEMGGNNPLVIGEVEDIDAAVHHTIQSAFLSAGQRCTCARRIFVPQGAFGDRFLARLTDVTSKITADVFDADPQPFMGAVISARAAAKLVDAQSRLIEQGAKPIIAMTQRDPRLGFVNAAIVDVTGVANLPDEEHFGPLAQIVRYATFDDAIERANDTAFGLSAGLLADDAKTWEHFRRTIRAGIVNWNRPTNGASSAAPFGGTGRSGNHRPSAYYAADYCAYPMASVESTQLTLPASLSPGLHF</sequence>
<evidence type="ECO:0000255" key="1">
    <source>
        <dbReference type="HAMAP-Rule" id="MF_01174"/>
    </source>
</evidence>
<name>ASTD_BURL3</name>
<keyword id="KW-0056">Arginine metabolism</keyword>
<keyword id="KW-0520">NAD</keyword>
<keyword id="KW-0560">Oxidoreductase</keyword>
<accession>Q39I25</accession>
<reference key="1">
    <citation type="submission" date="2005-10" db="EMBL/GenBank/DDBJ databases">
        <title>Complete sequence of chromosome 1 of Burkholderia sp. 383.</title>
        <authorList>
            <consortium name="US DOE Joint Genome Institute"/>
            <person name="Copeland A."/>
            <person name="Lucas S."/>
            <person name="Lapidus A."/>
            <person name="Barry K."/>
            <person name="Detter J.C."/>
            <person name="Glavina T."/>
            <person name="Hammon N."/>
            <person name="Israni S."/>
            <person name="Pitluck S."/>
            <person name="Chain P."/>
            <person name="Malfatti S."/>
            <person name="Shin M."/>
            <person name="Vergez L."/>
            <person name="Schmutz J."/>
            <person name="Larimer F."/>
            <person name="Land M."/>
            <person name="Kyrpides N."/>
            <person name="Lykidis A."/>
            <person name="Richardson P."/>
        </authorList>
    </citation>
    <scope>NUCLEOTIDE SEQUENCE [LARGE SCALE GENOMIC DNA]</scope>
    <source>
        <strain>ATCC 17760 / DSM 23089 / LMG 22485 / NCIMB 9086 / R18194 / 383</strain>
    </source>
</reference>
<gene>
    <name evidence="1" type="primary">astD</name>
    <name type="ordered locus">Bcep18194_A4294</name>
</gene>
<protein>
    <recommendedName>
        <fullName evidence="1">N-succinylglutamate 5-semialdehyde dehydrogenase</fullName>
        <ecNumber evidence="1">1.2.1.71</ecNumber>
    </recommendedName>
    <alternativeName>
        <fullName evidence="1">Succinylglutamic semialdehyde dehydrogenase</fullName>
        <shortName evidence="1">SGSD</shortName>
    </alternativeName>
</protein>
<feature type="chain" id="PRO_0000262391" description="N-succinylglutamate 5-semialdehyde dehydrogenase">
    <location>
        <begin position="1"/>
        <end position="487"/>
    </location>
</feature>
<feature type="active site" evidence="1">
    <location>
        <position position="244"/>
    </location>
</feature>
<feature type="active site" evidence="1">
    <location>
        <position position="278"/>
    </location>
</feature>
<feature type="binding site" evidence="1">
    <location>
        <begin position="221"/>
        <end position="226"/>
    </location>
    <ligand>
        <name>NAD(+)</name>
        <dbReference type="ChEBI" id="CHEBI:57540"/>
    </ligand>
</feature>